<sequence length="101" mass="10838">MTVRILAVCGNGQGSSMIMKMKVDQFLTQSNIDHTVNSCAVGEYKSELSGADIIIASTHIAGEITVTGNKYVVGVRNMLSPADFGPKLLEVIKAHFPQDVK</sequence>
<evidence type="ECO:0000250" key="1">
    <source>
        <dbReference type="UniProtKB" id="P00550"/>
    </source>
</evidence>
<evidence type="ECO:0000250" key="2">
    <source>
        <dbReference type="UniProtKB" id="P69822"/>
    </source>
</evidence>
<evidence type="ECO:0000255" key="3">
    <source>
        <dbReference type="PROSITE-ProRule" id="PRU00422"/>
    </source>
</evidence>
<evidence type="ECO:0000305" key="4"/>
<accession>Q83P29</accession>
<accession>Q7UAK7</accession>
<proteinExistence type="inferred from homology"/>
<protein>
    <recommendedName>
        <fullName evidence="2">Ascorbate-specific PTS system EIIB component</fullName>
        <ecNumber evidence="2">2.7.1.194</ecNumber>
    </recommendedName>
    <alternativeName>
        <fullName evidence="2">Ascorbate-specific phosphotransferase enzyme IIB component</fullName>
    </alternativeName>
</protein>
<keyword id="KW-0963">Cytoplasm</keyword>
<keyword id="KW-0418">Kinase</keyword>
<keyword id="KW-0597">Phosphoprotein</keyword>
<keyword id="KW-0598">Phosphotransferase system</keyword>
<keyword id="KW-1185">Reference proteome</keyword>
<keyword id="KW-0808">Transferase</keyword>
<keyword id="KW-0813">Transport</keyword>
<feature type="chain" id="PRO_0000230329" description="Ascorbate-specific PTS system EIIB component">
    <location>
        <begin position="1"/>
        <end position="101"/>
    </location>
</feature>
<feature type="domain" description="PTS EIIB type-2" evidence="3">
    <location>
        <begin position="3"/>
        <end position="96"/>
    </location>
</feature>
<feature type="active site" description="Phosphocysteine intermediate" evidence="1 4">
    <location>
        <position position="9"/>
    </location>
</feature>
<feature type="modified residue" description="Phosphocysteine" evidence="1 4">
    <location>
        <position position="9"/>
    </location>
</feature>
<gene>
    <name type="primary">ulaB</name>
    <name type="ordered locus">SF4349</name>
    <name type="ordered locus">S4619</name>
</gene>
<dbReference type="EC" id="2.7.1.194" evidence="2"/>
<dbReference type="EMBL" id="AE005674">
    <property type="protein sequence ID" value="AAN45766.2"/>
    <property type="molecule type" value="Genomic_DNA"/>
</dbReference>
<dbReference type="EMBL" id="AE014073">
    <property type="protein sequence ID" value="AAP19548.1"/>
    <property type="molecule type" value="Genomic_DNA"/>
</dbReference>
<dbReference type="RefSeq" id="WP_000218360.1">
    <property type="nucleotide sequence ID" value="NZ_WPGW01000113.1"/>
</dbReference>
<dbReference type="SMR" id="Q83P29"/>
<dbReference type="STRING" id="198214.SF4349"/>
<dbReference type="PaxDb" id="198214-SF4349"/>
<dbReference type="KEGG" id="sfl:SF4349"/>
<dbReference type="KEGG" id="sfx:S4619"/>
<dbReference type="PATRIC" id="fig|198214.7.peg.5128"/>
<dbReference type="HOGENOM" id="CLU_159248_0_0_6"/>
<dbReference type="Proteomes" id="UP000001006">
    <property type="component" value="Chromosome"/>
</dbReference>
<dbReference type="Proteomes" id="UP000002673">
    <property type="component" value="Chromosome"/>
</dbReference>
<dbReference type="GO" id="GO:0005737">
    <property type="term" value="C:cytoplasm"/>
    <property type="evidence" value="ECO:0007669"/>
    <property type="project" value="UniProtKB-SubCell"/>
</dbReference>
<dbReference type="GO" id="GO:0016301">
    <property type="term" value="F:kinase activity"/>
    <property type="evidence" value="ECO:0007669"/>
    <property type="project" value="UniProtKB-KW"/>
</dbReference>
<dbReference type="GO" id="GO:0008982">
    <property type="term" value="F:protein-N(PI)-phosphohistidine-sugar phosphotransferase activity"/>
    <property type="evidence" value="ECO:0007669"/>
    <property type="project" value="InterPro"/>
</dbReference>
<dbReference type="GO" id="GO:0009401">
    <property type="term" value="P:phosphoenolpyruvate-dependent sugar phosphotransferase system"/>
    <property type="evidence" value="ECO:0007669"/>
    <property type="project" value="UniProtKB-KW"/>
</dbReference>
<dbReference type="CDD" id="cd05563">
    <property type="entry name" value="PTS_IIB_ascorbate"/>
    <property type="match status" value="1"/>
</dbReference>
<dbReference type="FunFam" id="3.40.50.2300:FF:000030">
    <property type="entry name" value="PTS system, ascorbate-specific, IIB component"/>
    <property type="match status" value="1"/>
</dbReference>
<dbReference type="Gene3D" id="3.40.50.2300">
    <property type="match status" value="1"/>
</dbReference>
<dbReference type="InterPro" id="IPR036095">
    <property type="entry name" value="PTS_EIIB-like_sf"/>
</dbReference>
<dbReference type="InterPro" id="IPR013011">
    <property type="entry name" value="PTS_EIIB_2"/>
</dbReference>
<dbReference type="InterPro" id="IPR003501">
    <property type="entry name" value="PTS_EIIB_2/3"/>
</dbReference>
<dbReference type="NCBIfam" id="NF007586">
    <property type="entry name" value="PRK10222.1"/>
    <property type="match status" value="1"/>
</dbReference>
<dbReference type="Pfam" id="PF02302">
    <property type="entry name" value="PTS_IIB"/>
    <property type="match status" value="1"/>
</dbReference>
<dbReference type="SUPFAM" id="SSF52794">
    <property type="entry name" value="PTS system IIB component-like"/>
    <property type="match status" value="1"/>
</dbReference>
<dbReference type="PROSITE" id="PS51099">
    <property type="entry name" value="PTS_EIIB_TYPE_2"/>
    <property type="match status" value="1"/>
</dbReference>
<reference key="1">
    <citation type="journal article" date="2002" name="Nucleic Acids Res.">
        <title>Genome sequence of Shigella flexneri 2a: insights into pathogenicity through comparison with genomes of Escherichia coli K12 and O157.</title>
        <authorList>
            <person name="Jin Q."/>
            <person name="Yuan Z."/>
            <person name="Xu J."/>
            <person name="Wang Y."/>
            <person name="Shen Y."/>
            <person name="Lu W."/>
            <person name="Wang J."/>
            <person name="Liu H."/>
            <person name="Yang J."/>
            <person name="Yang F."/>
            <person name="Zhang X."/>
            <person name="Zhang J."/>
            <person name="Yang G."/>
            <person name="Wu H."/>
            <person name="Qu D."/>
            <person name="Dong J."/>
            <person name="Sun L."/>
            <person name="Xue Y."/>
            <person name="Zhao A."/>
            <person name="Gao Y."/>
            <person name="Zhu J."/>
            <person name="Kan B."/>
            <person name="Ding K."/>
            <person name="Chen S."/>
            <person name="Cheng H."/>
            <person name="Yao Z."/>
            <person name="He B."/>
            <person name="Chen R."/>
            <person name="Ma D."/>
            <person name="Qiang B."/>
            <person name="Wen Y."/>
            <person name="Hou Y."/>
            <person name="Yu J."/>
        </authorList>
    </citation>
    <scope>NUCLEOTIDE SEQUENCE [LARGE SCALE GENOMIC DNA]</scope>
    <source>
        <strain>301 / Serotype 2a</strain>
    </source>
</reference>
<reference key="2">
    <citation type="journal article" date="2003" name="Infect. Immun.">
        <title>Complete genome sequence and comparative genomics of Shigella flexneri serotype 2a strain 2457T.</title>
        <authorList>
            <person name="Wei J."/>
            <person name="Goldberg M.B."/>
            <person name="Burland V."/>
            <person name="Venkatesan M.M."/>
            <person name="Deng W."/>
            <person name="Fournier G."/>
            <person name="Mayhew G.F."/>
            <person name="Plunkett G. III"/>
            <person name="Rose D.J."/>
            <person name="Darling A."/>
            <person name="Mau B."/>
            <person name="Perna N.T."/>
            <person name="Payne S.M."/>
            <person name="Runyen-Janecky L.J."/>
            <person name="Zhou S."/>
            <person name="Schwartz D.C."/>
            <person name="Blattner F.R."/>
        </authorList>
    </citation>
    <scope>NUCLEOTIDE SEQUENCE [LARGE SCALE GENOMIC DNA]</scope>
    <source>
        <strain>ATCC 700930 / 2457T / Serotype 2a</strain>
    </source>
</reference>
<comment type="function">
    <text evidence="2">The phosphoenolpyruvate-dependent sugar phosphotransferase system (sugar PTS), a major carbohydrate active transport system, catalyzes the phosphorylation of incoming sugar substrates concomitantly with their translocation across the cell membrane. The enzyme II UlaABC PTS system is involved in ascorbate transport.</text>
</comment>
<comment type="catalytic activity">
    <reaction evidence="2">
        <text>N(pros)-phospho-L-histidyl-[protein] + L-ascorbate(out) = L-ascorbate 6-phosphate(in) + L-histidyl-[protein]</text>
        <dbReference type="Rhea" id="RHEA:42436"/>
        <dbReference type="Rhea" id="RHEA-COMP:9745"/>
        <dbReference type="Rhea" id="RHEA-COMP:9746"/>
        <dbReference type="ChEBI" id="CHEBI:29979"/>
        <dbReference type="ChEBI" id="CHEBI:38290"/>
        <dbReference type="ChEBI" id="CHEBI:61698"/>
        <dbReference type="ChEBI" id="CHEBI:64837"/>
        <dbReference type="EC" id="2.7.1.194"/>
    </reaction>
</comment>
<comment type="subcellular location">
    <subcellularLocation>
        <location evidence="4">Cytoplasm</location>
    </subcellularLocation>
</comment>
<comment type="induction">
    <text evidence="2">Induced by L-ascorbate. Repressed by UlaR.</text>
</comment>
<comment type="domain">
    <text evidence="3">The PTS EIIB type-2 domain is phosphorylated by phospho-EIIA on a cysteinyl residue. Then, it transfers the phosphoryl group to the sugar substrate concomitantly with the sugar uptake processed by the PTS EIIC type-2 domain.</text>
</comment>
<organism>
    <name type="scientific">Shigella flexneri</name>
    <dbReference type="NCBI Taxonomy" id="623"/>
    <lineage>
        <taxon>Bacteria</taxon>
        <taxon>Pseudomonadati</taxon>
        <taxon>Pseudomonadota</taxon>
        <taxon>Gammaproteobacteria</taxon>
        <taxon>Enterobacterales</taxon>
        <taxon>Enterobacteriaceae</taxon>
        <taxon>Shigella</taxon>
    </lineage>
</organism>
<name>ULAB_SHIFL</name>